<gene>
    <name evidence="1" type="primary">whiA</name>
    <name type="ordered locus">BH3567</name>
</gene>
<evidence type="ECO:0000255" key="1">
    <source>
        <dbReference type="HAMAP-Rule" id="MF_01420"/>
    </source>
</evidence>
<organism>
    <name type="scientific">Halalkalibacterium halodurans (strain ATCC BAA-125 / DSM 18197 / FERM 7344 / JCM 9153 / C-125)</name>
    <name type="common">Bacillus halodurans</name>
    <dbReference type="NCBI Taxonomy" id="272558"/>
    <lineage>
        <taxon>Bacteria</taxon>
        <taxon>Bacillati</taxon>
        <taxon>Bacillota</taxon>
        <taxon>Bacilli</taxon>
        <taxon>Bacillales</taxon>
        <taxon>Bacillaceae</taxon>
        <taxon>Halalkalibacterium (ex Joshi et al. 2022)</taxon>
    </lineage>
</organism>
<comment type="function">
    <text evidence="1">Involved in cell division and chromosome segregation.</text>
</comment>
<comment type="similarity">
    <text evidence="1">Belongs to the WhiA family.</text>
</comment>
<dbReference type="EMBL" id="BA000004">
    <property type="protein sequence ID" value="BAB07286.1"/>
    <property type="molecule type" value="Genomic_DNA"/>
</dbReference>
<dbReference type="PIR" id="G84095">
    <property type="entry name" value="G84095"/>
</dbReference>
<dbReference type="RefSeq" id="WP_010899695.1">
    <property type="nucleotide sequence ID" value="NC_002570.2"/>
</dbReference>
<dbReference type="SMR" id="Q9K707"/>
<dbReference type="STRING" id="272558.gene:10729480"/>
<dbReference type="KEGG" id="bha:BH3567"/>
<dbReference type="eggNOG" id="COG1481">
    <property type="taxonomic scope" value="Bacteria"/>
</dbReference>
<dbReference type="HOGENOM" id="CLU_053282_0_0_9"/>
<dbReference type="OrthoDB" id="401278at2"/>
<dbReference type="Proteomes" id="UP000001258">
    <property type="component" value="Chromosome"/>
</dbReference>
<dbReference type="GO" id="GO:0003677">
    <property type="term" value="F:DNA binding"/>
    <property type="evidence" value="ECO:0007669"/>
    <property type="project" value="UniProtKB-UniRule"/>
</dbReference>
<dbReference type="GO" id="GO:0051301">
    <property type="term" value="P:cell division"/>
    <property type="evidence" value="ECO:0007669"/>
    <property type="project" value="UniProtKB-UniRule"/>
</dbReference>
<dbReference type="GO" id="GO:0043937">
    <property type="term" value="P:regulation of sporulation"/>
    <property type="evidence" value="ECO:0007669"/>
    <property type="project" value="InterPro"/>
</dbReference>
<dbReference type="FunFam" id="3.10.28.10:FF:000002">
    <property type="entry name" value="Probable cell division protein WhiA"/>
    <property type="match status" value="1"/>
</dbReference>
<dbReference type="Gene3D" id="3.10.28.10">
    <property type="entry name" value="Homing endonucleases"/>
    <property type="match status" value="1"/>
</dbReference>
<dbReference type="HAMAP" id="MF_01420">
    <property type="entry name" value="HTH_type_WhiA"/>
    <property type="match status" value="1"/>
</dbReference>
<dbReference type="InterPro" id="IPR027434">
    <property type="entry name" value="Homing_endonucl"/>
</dbReference>
<dbReference type="InterPro" id="IPR018478">
    <property type="entry name" value="Sporu_reg_WhiA_N_dom"/>
</dbReference>
<dbReference type="InterPro" id="IPR003802">
    <property type="entry name" value="Sporulation_regulator_WhiA"/>
</dbReference>
<dbReference type="InterPro" id="IPR023054">
    <property type="entry name" value="Sporulation_regulator_WhiA_C"/>
</dbReference>
<dbReference type="InterPro" id="IPR039518">
    <property type="entry name" value="WhiA_LAGLIDADG_dom"/>
</dbReference>
<dbReference type="NCBIfam" id="TIGR00647">
    <property type="entry name" value="DNA_bind_WhiA"/>
    <property type="match status" value="1"/>
</dbReference>
<dbReference type="PANTHER" id="PTHR37307">
    <property type="entry name" value="CELL DIVISION PROTEIN WHIA-RELATED"/>
    <property type="match status" value="1"/>
</dbReference>
<dbReference type="PANTHER" id="PTHR37307:SF1">
    <property type="entry name" value="CELL DIVISION PROTEIN WHIA-RELATED"/>
    <property type="match status" value="1"/>
</dbReference>
<dbReference type="Pfam" id="PF02650">
    <property type="entry name" value="HTH_WhiA"/>
    <property type="match status" value="1"/>
</dbReference>
<dbReference type="Pfam" id="PF14527">
    <property type="entry name" value="LAGLIDADG_WhiA"/>
    <property type="match status" value="1"/>
</dbReference>
<dbReference type="Pfam" id="PF10298">
    <property type="entry name" value="WhiA_N"/>
    <property type="match status" value="1"/>
</dbReference>
<dbReference type="SUPFAM" id="SSF55608">
    <property type="entry name" value="Homing endonucleases"/>
    <property type="match status" value="1"/>
</dbReference>
<protein>
    <recommendedName>
        <fullName evidence="1">Probable cell division protein WhiA</fullName>
    </recommendedName>
</protein>
<accession>Q9K707</accession>
<keyword id="KW-0131">Cell cycle</keyword>
<keyword id="KW-0132">Cell division</keyword>
<keyword id="KW-0238">DNA-binding</keyword>
<keyword id="KW-1185">Reference proteome</keyword>
<sequence length="320" mass="36336">MSFAATTKKELTQLETDLCCSKAELAALIRMNGSLSFVNKQLGLDVTTENAAIARRIYTLIKKVFPMMFVELLVRKKMRLKKNNVYLVRLKQEAETLLKELKIIGEGFQIHRTISTDIVSATCCRRAYLRGAFLAGGSINHPETSSYHLEIFSLYEEHNESLCELMNSFQLNAKKLERKKGFITYIKESEKITEFLNIIGAHQALLYFEDVRIMKDMRNSVNRLVNCETANLNKTVGAALRQVENIKFLDQEIGLDALPTKLREIAELRLKHQDVTLKELGEMVESGKVSKSGVNHRLRKIDELAEKLRAGVPAESSSPR</sequence>
<name>WHIA_HALH5</name>
<proteinExistence type="inferred from homology"/>
<reference key="1">
    <citation type="journal article" date="2000" name="Nucleic Acids Res.">
        <title>Complete genome sequence of the alkaliphilic bacterium Bacillus halodurans and genomic sequence comparison with Bacillus subtilis.</title>
        <authorList>
            <person name="Takami H."/>
            <person name="Nakasone K."/>
            <person name="Takaki Y."/>
            <person name="Maeno G."/>
            <person name="Sasaki R."/>
            <person name="Masui N."/>
            <person name="Fuji F."/>
            <person name="Hirama C."/>
            <person name="Nakamura Y."/>
            <person name="Ogasawara N."/>
            <person name="Kuhara S."/>
            <person name="Horikoshi K."/>
        </authorList>
    </citation>
    <scope>NUCLEOTIDE SEQUENCE [LARGE SCALE GENOMIC DNA]</scope>
    <source>
        <strain>ATCC BAA-125 / DSM 18197 / FERM 7344 / JCM 9153 / C-125</strain>
    </source>
</reference>
<feature type="chain" id="PRO_0000376439" description="Probable cell division protein WhiA">
    <location>
        <begin position="1"/>
        <end position="320"/>
    </location>
</feature>
<feature type="DNA-binding region" description="H-T-H motif" evidence="1">
    <location>
        <begin position="276"/>
        <end position="310"/>
    </location>
</feature>